<keyword id="KW-0002">3D-structure</keyword>
<keyword id="KW-0009">Actin-binding</keyword>
<keyword id="KW-0010">Activator</keyword>
<keyword id="KW-0025">Alternative splicing</keyword>
<keyword id="KW-0053">Apoptosis</keyword>
<keyword id="KW-0160">Chromosomal rearrangement</keyword>
<keyword id="KW-0175">Coiled coil</keyword>
<keyword id="KW-0963">Cytoplasm</keyword>
<keyword id="KW-0968">Cytoplasmic vesicle</keyword>
<keyword id="KW-0221">Differentiation</keyword>
<keyword id="KW-0254">Endocytosis</keyword>
<keyword id="KW-0472">Membrane</keyword>
<keyword id="KW-0523">Neurodegeneration</keyword>
<keyword id="KW-0539">Nucleus</keyword>
<keyword id="KW-0597">Phosphoprotein</keyword>
<keyword id="KW-1267">Proteomics identification</keyword>
<keyword id="KW-1185">Reference proteome</keyword>
<keyword id="KW-0804">Transcription</keyword>
<keyword id="KW-0805">Transcription regulation</keyword>
<proteinExistence type="evidence at protein level"/>
<organism>
    <name type="scientific">Homo sapiens</name>
    <name type="common">Human</name>
    <dbReference type="NCBI Taxonomy" id="9606"/>
    <lineage>
        <taxon>Eukaryota</taxon>
        <taxon>Metazoa</taxon>
        <taxon>Chordata</taxon>
        <taxon>Craniata</taxon>
        <taxon>Vertebrata</taxon>
        <taxon>Euteleostomi</taxon>
        <taxon>Mammalia</taxon>
        <taxon>Eutheria</taxon>
        <taxon>Euarchontoglires</taxon>
        <taxon>Primates</taxon>
        <taxon>Haplorrhini</taxon>
        <taxon>Catarrhini</taxon>
        <taxon>Hominidae</taxon>
        <taxon>Homo</taxon>
    </lineage>
</organism>
<dbReference type="EMBL" id="KF437291">
    <property type="protein sequence ID" value="AHA56631.1"/>
    <property type="molecule type" value="mRNA"/>
</dbReference>
<dbReference type="EMBL" id="AK304738">
    <property type="protein sequence ID" value="BAG65499.1"/>
    <property type="molecule type" value="mRNA"/>
</dbReference>
<dbReference type="EMBL" id="AC004491">
    <property type="status" value="NOT_ANNOTATED_CDS"/>
    <property type="molecule type" value="Genomic_DNA"/>
</dbReference>
<dbReference type="EMBL" id="AC018720">
    <property type="status" value="NOT_ANNOTATED_CDS"/>
    <property type="molecule type" value="Genomic_DNA"/>
</dbReference>
<dbReference type="EMBL" id="AC211429">
    <property type="status" value="NOT_ANNOTATED_CDS"/>
    <property type="molecule type" value="Genomic_DNA"/>
</dbReference>
<dbReference type="EMBL" id="KF495977">
    <property type="status" value="NOT_ANNOTATED_CDS"/>
    <property type="molecule type" value="Genomic_DNA"/>
</dbReference>
<dbReference type="EMBL" id="BC110545">
    <property type="protein sequence ID" value="AAI10546.1"/>
    <property type="molecule type" value="mRNA"/>
</dbReference>
<dbReference type="EMBL" id="AF365404">
    <property type="protein sequence ID" value="AAL87037.1"/>
    <property type="molecule type" value="mRNA"/>
</dbReference>
<dbReference type="EMBL" id="AH006397">
    <property type="protein sequence ID" value="AAC33564.1"/>
    <property type="molecule type" value="Genomic_DNA"/>
</dbReference>
<dbReference type="EMBL" id="U79734">
    <property type="protein sequence ID" value="AAC51257.1"/>
    <property type="status" value="ALT_INIT"/>
    <property type="molecule type" value="mRNA"/>
</dbReference>
<dbReference type="EMBL" id="Y09420">
    <property type="protein sequence ID" value="CAA70574.1"/>
    <property type="molecule type" value="mRNA"/>
</dbReference>
<dbReference type="CCDS" id="CCDS34669.1">
    <molecule id="O00291-1"/>
</dbReference>
<dbReference type="CCDS" id="CCDS59060.1">
    <molecule id="O00291-3"/>
</dbReference>
<dbReference type="CCDS" id="CCDS94128.1">
    <molecule id="O00291-4"/>
</dbReference>
<dbReference type="RefSeq" id="NP_001230127.1">
    <molecule id="O00291-3"/>
    <property type="nucleotide sequence ID" value="NM_001243198.3"/>
</dbReference>
<dbReference type="RefSeq" id="NP_001369374.1">
    <molecule id="O00291-4"/>
    <property type="nucleotide sequence ID" value="NM_001382445.1"/>
</dbReference>
<dbReference type="RefSeq" id="NP_005329.3">
    <molecule id="O00291-1"/>
    <property type="nucleotide sequence ID" value="NM_005338.6"/>
</dbReference>
<dbReference type="RefSeq" id="XP_005250361.1">
    <property type="nucleotide sequence ID" value="XM_005250304.2"/>
</dbReference>
<dbReference type="RefSeq" id="XP_011514418.1">
    <molecule id="O00291-1"/>
    <property type="nucleotide sequence ID" value="XM_011516116.3"/>
</dbReference>
<dbReference type="RefSeq" id="XP_047276250.1">
    <molecule id="O00291-4"/>
    <property type="nucleotide sequence ID" value="XM_047420294.1"/>
</dbReference>
<dbReference type="RefSeq" id="XP_054214014.1">
    <molecule id="O00291-1"/>
    <property type="nucleotide sequence ID" value="XM_054358039.1"/>
</dbReference>
<dbReference type="RefSeq" id="XP_054214016.1">
    <molecule id="O00291-4"/>
    <property type="nucleotide sequence ID" value="XM_054358041.1"/>
</dbReference>
<dbReference type="PDB" id="2NO2">
    <property type="method" value="X-ray"/>
    <property type="resolution" value="2.80 A"/>
    <property type="chains" value="A=482-586"/>
</dbReference>
<dbReference type="PDB" id="2QA7">
    <property type="method" value="X-ray"/>
    <property type="resolution" value="2.80 A"/>
    <property type="chains" value="A/B/C/D=370-481"/>
</dbReference>
<dbReference type="PDB" id="3I00">
    <property type="method" value="X-ray"/>
    <property type="resolution" value="2.30 A"/>
    <property type="chains" value="A/B=361-480"/>
</dbReference>
<dbReference type="PDBsum" id="2NO2"/>
<dbReference type="PDBsum" id="2QA7"/>
<dbReference type="PDBsum" id="3I00"/>
<dbReference type="SMR" id="O00291"/>
<dbReference type="BioGRID" id="109339">
    <property type="interactions" value="104"/>
</dbReference>
<dbReference type="CORUM" id="O00291"/>
<dbReference type="DIP" id="DIP-17041N"/>
<dbReference type="ELM" id="O00291"/>
<dbReference type="FunCoup" id="O00291">
    <property type="interactions" value="1794"/>
</dbReference>
<dbReference type="IntAct" id="O00291">
    <property type="interactions" value="123"/>
</dbReference>
<dbReference type="MINT" id="O00291"/>
<dbReference type="STRING" id="9606.ENSP00000336747"/>
<dbReference type="MoonDB" id="O00291">
    <property type="type" value="Curated"/>
</dbReference>
<dbReference type="TCDB" id="1.N.7.1.1">
    <property type="family name" value="the endomembrane fusion/trafficking (emfst) family"/>
</dbReference>
<dbReference type="GlyGen" id="O00291">
    <property type="glycosylation" value="1 site, 1 O-linked glycan (1 site)"/>
</dbReference>
<dbReference type="iPTMnet" id="O00291"/>
<dbReference type="MetOSite" id="O00291"/>
<dbReference type="PhosphoSitePlus" id="O00291"/>
<dbReference type="SwissPalm" id="O00291"/>
<dbReference type="BioMuta" id="HIP1"/>
<dbReference type="jPOST" id="O00291"/>
<dbReference type="MassIVE" id="O00291"/>
<dbReference type="PaxDb" id="9606-ENSP00000336747"/>
<dbReference type="PeptideAtlas" id="O00291"/>
<dbReference type="ProteomicsDB" id="17894"/>
<dbReference type="ProteomicsDB" id="47823">
    <molecule id="O00291-1"/>
</dbReference>
<dbReference type="Pumba" id="O00291"/>
<dbReference type="Antibodypedia" id="2857">
    <property type="antibodies" value="287 antibodies from 35 providers"/>
</dbReference>
<dbReference type="DNASU" id="3092"/>
<dbReference type="Ensembl" id="ENST00000336926.11">
    <molecule id="O00291-1"/>
    <property type="protein sequence ID" value="ENSP00000336747.6"/>
    <property type="gene ID" value="ENSG00000127946.17"/>
</dbReference>
<dbReference type="Ensembl" id="ENST00000434438.6">
    <molecule id="O00291-3"/>
    <property type="protein sequence ID" value="ENSP00000410300.2"/>
    <property type="gene ID" value="ENSG00000127946.17"/>
</dbReference>
<dbReference type="Ensembl" id="ENST00000616821.4">
    <molecule id="O00291-4"/>
    <property type="protein sequence ID" value="ENSP00000484528.1"/>
    <property type="gene ID" value="ENSG00000127946.17"/>
</dbReference>
<dbReference type="GeneID" id="3092"/>
<dbReference type="KEGG" id="hsa:3092"/>
<dbReference type="MANE-Select" id="ENST00000336926.11">
    <property type="protein sequence ID" value="ENSP00000336747.6"/>
    <property type="RefSeq nucleotide sequence ID" value="NM_005338.7"/>
    <property type="RefSeq protein sequence ID" value="NP_005329.3"/>
</dbReference>
<dbReference type="UCSC" id="uc003uds.4">
    <molecule id="O00291-1"/>
    <property type="organism name" value="human"/>
</dbReference>
<dbReference type="UCSC" id="uc064emn.1">
    <property type="organism name" value="human"/>
</dbReference>
<dbReference type="AGR" id="HGNC:4913"/>
<dbReference type="CTD" id="3092"/>
<dbReference type="DisGeNET" id="3092"/>
<dbReference type="GeneCards" id="HIP1"/>
<dbReference type="HGNC" id="HGNC:4913">
    <property type="gene designation" value="HIP1"/>
</dbReference>
<dbReference type="HPA" id="ENSG00000127946">
    <property type="expression patterns" value="Low tissue specificity"/>
</dbReference>
<dbReference type="MalaCards" id="HIP1"/>
<dbReference type="MIM" id="601767">
    <property type="type" value="gene"/>
</dbReference>
<dbReference type="neXtProt" id="NX_O00291"/>
<dbReference type="OpenTargets" id="ENSG00000127946"/>
<dbReference type="PharmGKB" id="PA29289"/>
<dbReference type="VEuPathDB" id="HostDB:ENSG00000127946"/>
<dbReference type="eggNOG" id="KOG0980">
    <property type="taxonomic scope" value="Eukaryota"/>
</dbReference>
<dbReference type="GeneTree" id="ENSGT00940000153594"/>
<dbReference type="HOGENOM" id="CLU_006034_0_0_1"/>
<dbReference type="InParanoid" id="O00291"/>
<dbReference type="OMA" id="SSCTEQL"/>
<dbReference type="OrthoDB" id="8178130at2759"/>
<dbReference type="PAN-GO" id="O00291">
    <property type="GO annotations" value="13 GO annotations based on evolutionary models"/>
</dbReference>
<dbReference type="PhylomeDB" id="O00291"/>
<dbReference type="TreeFam" id="TF316860"/>
<dbReference type="PathwayCommons" id="O00291"/>
<dbReference type="Reactome" id="R-HSA-8856828">
    <property type="pathway name" value="Clathrin-mediated endocytosis"/>
</dbReference>
<dbReference type="Reactome" id="R-HSA-9700645">
    <property type="pathway name" value="ALK mutants bind TKIs"/>
</dbReference>
<dbReference type="Reactome" id="R-HSA-9725370">
    <property type="pathway name" value="Signaling by ALK fusions and activated point mutants"/>
</dbReference>
<dbReference type="SignaLink" id="O00291"/>
<dbReference type="SIGNOR" id="O00291"/>
<dbReference type="BioGRID-ORCS" id="3092">
    <property type="hits" value="20 hits in 1157 CRISPR screens"/>
</dbReference>
<dbReference type="CD-CODE" id="FB4E32DD">
    <property type="entry name" value="Presynaptic clusters and postsynaptic densities"/>
</dbReference>
<dbReference type="ChiTaRS" id="HIP1">
    <property type="organism name" value="human"/>
</dbReference>
<dbReference type="EvolutionaryTrace" id="O00291"/>
<dbReference type="GenomeRNAi" id="3092"/>
<dbReference type="Pharos" id="O00291">
    <property type="development level" value="Tbio"/>
</dbReference>
<dbReference type="PRO" id="PR:O00291"/>
<dbReference type="Proteomes" id="UP000005640">
    <property type="component" value="Chromosome 7"/>
</dbReference>
<dbReference type="RNAct" id="O00291">
    <property type="molecule type" value="protein"/>
</dbReference>
<dbReference type="Bgee" id="ENSG00000127946">
    <property type="expression patterns" value="Expressed in corpus callosum and 189 other cell types or tissues"/>
</dbReference>
<dbReference type="ExpressionAtlas" id="O00291">
    <property type="expression patterns" value="baseline and differential"/>
</dbReference>
<dbReference type="GO" id="GO:0030136">
    <property type="term" value="C:clathrin-coated vesicle"/>
    <property type="evidence" value="ECO:0000314"/>
    <property type="project" value="UniProtKB"/>
</dbReference>
<dbReference type="GO" id="GO:0030665">
    <property type="term" value="C:clathrin-coated vesicle membrane"/>
    <property type="evidence" value="ECO:0007669"/>
    <property type="project" value="UniProtKB-SubCell"/>
</dbReference>
<dbReference type="GO" id="GO:0030864">
    <property type="term" value="C:cortical actin cytoskeleton"/>
    <property type="evidence" value="ECO:0000318"/>
    <property type="project" value="GO_Central"/>
</dbReference>
<dbReference type="GO" id="GO:0005737">
    <property type="term" value="C:cytoplasm"/>
    <property type="evidence" value="ECO:0000314"/>
    <property type="project" value="MGI"/>
</dbReference>
<dbReference type="GO" id="GO:0005856">
    <property type="term" value="C:cytoskeleton"/>
    <property type="evidence" value="ECO:0000304"/>
    <property type="project" value="ProtInc"/>
</dbReference>
<dbReference type="GO" id="GO:0005829">
    <property type="term" value="C:cytosol"/>
    <property type="evidence" value="ECO:0000304"/>
    <property type="project" value="Reactome"/>
</dbReference>
<dbReference type="GO" id="GO:0098978">
    <property type="term" value="C:glutamatergic synapse"/>
    <property type="evidence" value="ECO:0007669"/>
    <property type="project" value="Ensembl"/>
</dbReference>
<dbReference type="GO" id="GO:0005794">
    <property type="term" value="C:Golgi apparatus"/>
    <property type="evidence" value="ECO:0000314"/>
    <property type="project" value="MGI"/>
</dbReference>
<dbReference type="GO" id="GO:0043231">
    <property type="term" value="C:intracellular membrane-bounded organelle"/>
    <property type="evidence" value="ECO:0000314"/>
    <property type="project" value="HPA"/>
</dbReference>
<dbReference type="GO" id="GO:0016020">
    <property type="term" value="C:membrane"/>
    <property type="evidence" value="ECO:0000304"/>
    <property type="project" value="ProtInc"/>
</dbReference>
<dbReference type="GO" id="GO:0005634">
    <property type="term" value="C:nucleus"/>
    <property type="evidence" value="ECO:0000304"/>
    <property type="project" value="ParkinsonsUK-UCL"/>
</dbReference>
<dbReference type="GO" id="GO:0098794">
    <property type="term" value="C:postsynapse"/>
    <property type="evidence" value="ECO:0000304"/>
    <property type="project" value="ParkinsonsUK-UCL"/>
</dbReference>
<dbReference type="GO" id="GO:0098793">
    <property type="term" value="C:presynapse"/>
    <property type="evidence" value="ECO:0000314"/>
    <property type="project" value="ParkinsonsUK-UCL"/>
</dbReference>
<dbReference type="GO" id="GO:0098685">
    <property type="term" value="C:Schaffer collateral - CA1 synapse"/>
    <property type="evidence" value="ECO:0007669"/>
    <property type="project" value="Ensembl"/>
</dbReference>
<dbReference type="GO" id="GO:0051015">
    <property type="term" value="F:actin filament binding"/>
    <property type="evidence" value="ECO:0000314"/>
    <property type="project" value="ParkinsonsUK-UCL"/>
</dbReference>
<dbReference type="GO" id="GO:0035612">
    <property type="term" value="F:AP-2 adaptor complex binding"/>
    <property type="evidence" value="ECO:0000353"/>
    <property type="project" value="ParkinsonsUK-UCL"/>
</dbReference>
<dbReference type="GO" id="GO:0035615">
    <property type="term" value="F:clathrin adaptor activity"/>
    <property type="evidence" value="ECO:0000318"/>
    <property type="project" value="GO_Central"/>
</dbReference>
<dbReference type="GO" id="GO:0030276">
    <property type="term" value="F:clathrin binding"/>
    <property type="evidence" value="ECO:0000314"/>
    <property type="project" value="MGI"/>
</dbReference>
<dbReference type="GO" id="GO:0032051">
    <property type="term" value="F:clathrin light chain binding"/>
    <property type="evidence" value="ECO:0000353"/>
    <property type="project" value="ParkinsonsUK-UCL"/>
</dbReference>
<dbReference type="GO" id="GO:0005154">
    <property type="term" value="F:epidermal growth factor receptor binding"/>
    <property type="evidence" value="ECO:0000304"/>
    <property type="project" value="ParkinsonsUK-UCL"/>
</dbReference>
<dbReference type="GO" id="GO:0035254">
    <property type="term" value="F:glutamate receptor binding"/>
    <property type="evidence" value="ECO:0000304"/>
    <property type="project" value="ParkinsonsUK-UCL"/>
</dbReference>
<dbReference type="GO" id="GO:0035091">
    <property type="term" value="F:phosphatidylinositol binding"/>
    <property type="evidence" value="ECO:0000314"/>
    <property type="project" value="UniProtKB"/>
</dbReference>
<dbReference type="GO" id="GO:0043325">
    <property type="term" value="F:phosphatidylinositol-3,4-bisphosphate binding"/>
    <property type="evidence" value="ECO:0000314"/>
    <property type="project" value="ParkinsonsUK-UCL"/>
</dbReference>
<dbReference type="GO" id="GO:0080025">
    <property type="term" value="F:phosphatidylinositol-3,5-bisphosphate binding"/>
    <property type="evidence" value="ECO:0000314"/>
    <property type="project" value="ParkinsonsUK-UCL"/>
</dbReference>
<dbReference type="GO" id="GO:0032266">
    <property type="term" value="F:phosphatidylinositol-3-phosphate binding"/>
    <property type="evidence" value="ECO:0000314"/>
    <property type="project" value="ParkinsonsUK-UCL"/>
</dbReference>
<dbReference type="GO" id="GO:0046982">
    <property type="term" value="F:protein heterodimerization activity"/>
    <property type="evidence" value="ECO:0000353"/>
    <property type="project" value="ParkinsonsUK-UCL"/>
</dbReference>
<dbReference type="GO" id="GO:0042803">
    <property type="term" value="F:protein homodimerization activity"/>
    <property type="evidence" value="ECO:0000353"/>
    <property type="project" value="ParkinsonsUK-UCL"/>
</dbReference>
<dbReference type="GO" id="GO:0005200">
    <property type="term" value="F:structural constituent of cytoskeleton"/>
    <property type="evidence" value="ECO:0000304"/>
    <property type="project" value="ProtInc"/>
</dbReference>
<dbReference type="GO" id="GO:0007015">
    <property type="term" value="P:actin filament organization"/>
    <property type="evidence" value="ECO:0000318"/>
    <property type="project" value="GO_Central"/>
</dbReference>
<dbReference type="GO" id="GO:0006915">
    <property type="term" value="P:apoptotic process"/>
    <property type="evidence" value="ECO:0000314"/>
    <property type="project" value="MGI"/>
</dbReference>
<dbReference type="GO" id="GO:0097190">
    <property type="term" value="P:apoptotic signaling pathway"/>
    <property type="evidence" value="ECO:0000314"/>
    <property type="project" value="UniProtKB"/>
</dbReference>
<dbReference type="GO" id="GO:0030154">
    <property type="term" value="P:cell differentiation"/>
    <property type="evidence" value="ECO:0007669"/>
    <property type="project" value="UniProtKB-KW"/>
</dbReference>
<dbReference type="GO" id="GO:0048268">
    <property type="term" value="P:clathrin coat assembly"/>
    <property type="evidence" value="ECO:0000314"/>
    <property type="project" value="UniProtKB"/>
</dbReference>
<dbReference type="GO" id="GO:0006897">
    <property type="term" value="P:endocytosis"/>
    <property type="evidence" value="ECO:0000318"/>
    <property type="project" value="GO_Central"/>
</dbReference>
<dbReference type="GO" id="GO:0099637">
    <property type="term" value="P:neurotransmitter receptor transport"/>
    <property type="evidence" value="ECO:0000304"/>
    <property type="project" value="ParkinsonsUK-UCL"/>
</dbReference>
<dbReference type="GO" id="GO:0045742">
    <property type="term" value="P:positive regulation of epidermal growth factor receptor signaling pathway"/>
    <property type="evidence" value="ECO:0000315"/>
    <property type="project" value="ParkinsonsUK-UCL"/>
</dbReference>
<dbReference type="GO" id="GO:0051897">
    <property type="term" value="P:positive regulation of phosphatidylinositol 3-kinase/protein kinase B signal transduction"/>
    <property type="evidence" value="ECO:0000305"/>
    <property type="project" value="ParkinsonsUK-UCL"/>
</dbReference>
<dbReference type="GO" id="GO:2000588">
    <property type="term" value="P:positive regulation of platelet-derived growth factor receptor-beta signaling pathway"/>
    <property type="evidence" value="ECO:0000315"/>
    <property type="project" value="ParkinsonsUK-UCL"/>
</dbReference>
<dbReference type="GO" id="GO:0048260">
    <property type="term" value="P:positive regulation of receptor-mediated endocytosis"/>
    <property type="evidence" value="ECO:0000315"/>
    <property type="project" value="UniProtKB"/>
</dbReference>
<dbReference type="GO" id="GO:0099171">
    <property type="term" value="P:presynaptic modulation of chemical synaptic transmission"/>
    <property type="evidence" value="ECO:0007669"/>
    <property type="project" value="Ensembl"/>
</dbReference>
<dbReference type="GO" id="GO:0050821">
    <property type="term" value="P:protein stabilization"/>
    <property type="evidence" value="ECO:0000314"/>
    <property type="project" value="ParkinsonsUK-UCL"/>
</dbReference>
<dbReference type="GO" id="GO:0042981">
    <property type="term" value="P:regulation of apoptotic process"/>
    <property type="evidence" value="ECO:0000314"/>
    <property type="project" value="MGI"/>
</dbReference>
<dbReference type="GO" id="GO:0030100">
    <property type="term" value="P:regulation of endocytosis"/>
    <property type="evidence" value="ECO:0000303"/>
    <property type="project" value="ParkinsonsUK-UCL"/>
</dbReference>
<dbReference type="GO" id="GO:0099149">
    <property type="term" value="P:regulation of postsynaptic neurotransmitter receptor internalization"/>
    <property type="evidence" value="ECO:0007669"/>
    <property type="project" value="Ensembl"/>
</dbReference>
<dbReference type="CDD" id="cd17013">
    <property type="entry name" value="ANTH_N_HIP1"/>
    <property type="match status" value="1"/>
</dbReference>
<dbReference type="FunFam" id="1.20.1410.10:FF:000002">
    <property type="entry name" value="Huntingtin interacting protein 1"/>
    <property type="match status" value="1"/>
</dbReference>
<dbReference type="FunFam" id="1.20.5.1700:FF:000002">
    <property type="entry name" value="Huntingtin interacting protein 1"/>
    <property type="match status" value="1"/>
</dbReference>
<dbReference type="FunFam" id="1.25.40.90:FF:000022">
    <property type="entry name" value="huntingtin-interacting protein 1 isoform X1"/>
    <property type="match status" value="1"/>
</dbReference>
<dbReference type="Gene3D" id="1.20.5.1700">
    <property type="match status" value="1"/>
</dbReference>
<dbReference type="Gene3D" id="1.25.40.90">
    <property type="match status" value="1"/>
</dbReference>
<dbReference type="Gene3D" id="6.10.250.920">
    <property type="match status" value="1"/>
</dbReference>
<dbReference type="Gene3D" id="1.20.1410.10">
    <property type="entry name" value="I/LWEQ domain"/>
    <property type="match status" value="1"/>
</dbReference>
<dbReference type="IDEAL" id="IID00689"/>
<dbReference type="InterPro" id="IPR011417">
    <property type="entry name" value="ANTH_dom"/>
</dbReference>
<dbReference type="InterPro" id="IPR013809">
    <property type="entry name" value="ENTH"/>
</dbReference>
<dbReference type="InterPro" id="IPR008942">
    <property type="entry name" value="ENTH_VHS"/>
</dbReference>
<dbReference type="InterPro" id="IPR032422">
    <property type="entry name" value="HIP1_clath-bd"/>
</dbReference>
<dbReference type="InterPro" id="IPR035964">
    <property type="entry name" value="I/LWEQ_dom_sf"/>
</dbReference>
<dbReference type="InterPro" id="IPR002558">
    <property type="entry name" value="ILWEQ_dom"/>
</dbReference>
<dbReference type="InterPro" id="IPR030224">
    <property type="entry name" value="Sla2_fam"/>
</dbReference>
<dbReference type="PANTHER" id="PTHR10407">
    <property type="entry name" value="HUNTINGTIN INTERACTING PROTEIN 1"/>
    <property type="match status" value="1"/>
</dbReference>
<dbReference type="PANTHER" id="PTHR10407:SF14">
    <property type="entry name" value="HUNTINGTIN-INTERACTING PROTEIN 1"/>
    <property type="match status" value="1"/>
</dbReference>
<dbReference type="Pfam" id="PF07651">
    <property type="entry name" value="ANTH"/>
    <property type="match status" value="1"/>
</dbReference>
<dbReference type="Pfam" id="PF16515">
    <property type="entry name" value="HIP1_clath_bdg"/>
    <property type="match status" value="1"/>
</dbReference>
<dbReference type="Pfam" id="PF01608">
    <property type="entry name" value="I_LWEQ"/>
    <property type="match status" value="1"/>
</dbReference>
<dbReference type="SMART" id="SM00273">
    <property type="entry name" value="ENTH"/>
    <property type="match status" value="1"/>
</dbReference>
<dbReference type="SMART" id="SM00307">
    <property type="entry name" value="ILWEQ"/>
    <property type="match status" value="1"/>
</dbReference>
<dbReference type="SUPFAM" id="SSF48464">
    <property type="entry name" value="ENTH/VHS domain"/>
    <property type="match status" value="1"/>
</dbReference>
<dbReference type="SUPFAM" id="SSF109885">
    <property type="entry name" value="I/LWEQ domain"/>
    <property type="match status" value="1"/>
</dbReference>
<dbReference type="PROSITE" id="PS50942">
    <property type="entry name" value="ENTH"/>
    <property type="match status" value="1"/>
</dbReference>
<dbReference type="PROSITE" id="PS50945">
    <property type="entry name" value="I_LWEQ"/>
    <property type="match status" value="1"/>
</dbReference>
<feature type="chain" id="PRO_0000083986" description="Huntingtin-interacting protein 1">
    <location>
        <begin position="1"/>
        <end position="1037"/>
    </location>
</feature>
<feature type="domain" description="ENTH" evidence="4">
    <location>
        <begin position="32"/>
        <end position="160"/>
    </location>
</feature>
<feature type="domain" description="I/LWEQ" evidence="5">
    <location>
        <begin position="771"/>
        <end position="1012"/>
    </location>
</feature>
<feature type="region of interest" description="pDED">
    <location>
        <begin position="410"/>
        <end position="491"/>
    </location>
</feature>
<feature type="region of interest" description="Important for actin binding" evidence="1">
    <location>
        <begin position="867"/>
        <end position="924"/>
    </location>
</feature>
<feature type="region of interest" description="Disordered" evidence="6">
    <location>
        <begin position="1017"/>
        <end position="1037"/>
    </location>
</feature>
<feature type="coiled-coil region" evidence="3">
    <location>
        <begin position="368"/>
        <end position="644"/>
    </location>
</feature>
<feature type="modified residue" description="Phosphoserine" evidence="23">
    <location>
        <position position="338"/>
    </location>
</feature>
<feature type="splice variant" id="VSP_057400" description="In isoform 4." evidence="21">
    <original>MDRMASSMKQVPNPLPKVLSRRGVGAGLEAAERESFERTQ</original>
    <variation>MMFPNPEPPPE</variation>
    <location>
        <begin position="1"/>
        <end position="40"/>
    </location>
</feature>
<feature type="splice variant" id="VSP_044736" description="In isoform 3." evidence="20">
    <location>
        <begin position="803"/>
        <end position="853"/>
    </location>
</feature>
<feature type="sequence variant" id="VAR_051032" description="In dbSNP:rs17149023.">
    <original>M</original>
    <variation>K</variation>
    <location>
        <position position="263"/>
    </location>
</feature>
<feature type="mutagenesis site" description="Abolishes 3-phosphoinositide-binding; when associated with E-58." evidence="15">
    <original>K</original>
    <variation>E</variation>
    <location>
        <position position="56"/>
    </location>
</feature>
<feature type="mutagenesis site" description="Abolishes 3-phosphoinositide-binding; when associated with E-56." evidence="15">
    <original>K</original>
    <variation>E</variation>
    <location>
        <position position="58"/>
    </location>
</feature>
<feature type="mutagenesis site" description="Abolishes HIP1-induced cell death." evidence="7">
    <original>F</original>
    <variation>G</variation>
    <location>
        <position position="432"/>
    </location>
</feature>
<feature type="mutagenesis site" description="Reduces AR-induced nuclear translocation." evidence="15">
    <original>R</original>
    <variation>E</variation>
    <location>
        <position position="1005"/>
    </location>
</feature>
<feature type="sequence conflict" description="In Ref. 5; AAC33564." evidence="22" ref="5">
    <original>A</original>
    <variation>P</variation>
    <location>
        <position position="89"/>
    </location>
</feature>
<feature type="sequence conflict" description="In Ref. 8; CAA70574." evidence="22" ref="8">
    <original>KLHSCLP</original>
    <variation>EFAAAST</variation>
    <location>
        <begin position="245"/>
        <end position="251"/>
    </location>
</feature>
<feature type="sequence conflict" description="In Ref. 2; BAG65499." evidence="22" ref="2">
    <original>S</original>
    <variation>R</variation>
    <location>
        <position position="357"/>
    </location>
</feature>
<feature type="sequence conflict" description="In Ref. 8; CAA70574." evidence="22" ref="8">
    <original>LNQLEE</original>
    <variation>STRPRI</variation>
    <location>
        <begin position="639"/>
        <end position="644"/>
    </location>
</feature>
<feature type="sequence conflict" description="In Ref. 5; AAL87037." evidence="22" ref="5">
    <original>L</original>
    <variation>F</variation>
    <location>
        <position position="688"/>
    </location>
</feature>
<feature type="helix" evidence="26">
    <location>
        <begin position="373"/>
        <end position="441"/>
    </location>
</feature>
<feature type="turn" evidence="25">
    <location>
        <begin position="459"/>
        <end position="461"/>
    </location>
</feature>
<feature type="helix" evidence="25">
    <location>
        <begin position="462"/>
        <end position="465"/>
    </location>
</feature>
<feature type="helix" evidence="24">
    <location>
        <begin position="482"/>
        <end position="580"/>
    </location>
</feature>
<gene>
    <name type="primary">HIP1</name>
</gene>
<name>HIP1_HUMAN</name>
<sequence>MDRMASSMKQVPNPLPKVLSRRGVGAGLEAAERESFERTQTVSINKAINTQEVAVKEKHARTCILGTHHEKGAQTFWSVVNRLPLSSNAVLCWKFCHVFHKLLRDGHPNVLKDSLRYRNELSDMSRMWGHLSEGYGQLCSIYLKLLRTKMEYHTKNPRFPGNLQMSDRQLDEAGESDVNNFFQLTVEMFDYLECELNLFQTVFNSLDMSRSVSVTAAGQCRLAPLIQVILDCSHLYDYTVKLLFKLHSCLPADTLQGHRDRFMEQFTKLKDLFYRSSNLQYFKRLIQIPQLPENPPNFLRASALSEHISPVVVIPAEASSPDSEPVLEKDDLMDMDASQQNLFDNKFDDIFGSSFSSDPFNFNSQNGVNKDEKDHLIERLYREISGLKAQLENMKTESQRVVLQLKGHVSELEADLAEQQHLRQQAADDCEFLRAELDELRRQREDTEKAQRSLSEIERKAQANEQRYSKLKEKYSELVQNHADLLRKNAEVTKQVSMARQAQVDLEREKKELEDSLERISDQGQRKTQEQLEVLESLKQELATSQRELQVLQGSLETSAQSEANWAAEFAELEKERDSLVSGAAHREEELSALRKELQDTQLKLASTEESMCQLAKDQRKMLLVGSRKAAEQVIQDALNQLEEPPLISCAGSADHLLSTVTSISSCIEQLEKSWSQYLACPEDISGLLHSITLLAHLTSDAIAHGATTCLRAPPEPADSLTEACKQYGRETLAYLASLEEEGSLENADSTAMRNCLSKIKAIGEELLPRGLDIKQEELGDLVDKEMAATSAAIETATARIEEMLSKSRAGDTGVKLEVNERILGCCTSLMQAIQVLIVASKDLQREIVESGRGTASPKEFYAKNSRWTEGLISASKAVGWGATVMVDAADLVVQGRGKFEELMVCSHEIAASTAQLVAASKVKADKDSPNLAQLQQASRGVNQATAGVVASTISGKSQIEETDNMDFSSMTLTQIKRQEMDSQVRVLELENELQKERQKLGELRKKHYELAGVAEGWEEGTEASPPTLQEVVTEKE</sequence>
<evidence type="ECO:0000250" key="1"/>
<evidence type="ECO:0000250" key="2">
    <source>
        <dbReference type="UniProtKB" id="Q8VD75"/>
    </source>
</evidence>
<evidence type="ECO:0000255" key="3"/>
<evidence type="ECO:0000255" key="4">
    <source>
        <dbReference type="PROSITE-ProRule" id="PRU00243"/>
    </source>
</evidence>
<evidence type="ECO:0000255" key="5">
    <source>
        <dbReference type="PROSITE-ProRule" id="PRU00292"/>
    </source>
</evidence>
<evidence type="ECO:0000256" key="6">
    <source>
        <dbReference type="SAM" id="MobiDB-lite"/>
    </source>
</evidence>
<evidence type="ECO:0000269" key="7">
    <source>
    </source>
</evidence>
<evidence type="ECO:0000269" key="8">
    <source>
    </source>
</evidence>
<evidence type="ECO:0000269" key="9">
    <source>
    </source>
</evidence>
<evidence type="ECO:0000269" key="10">
    <source>
    </source>
</evidence>
<evidence type="ECO:0000269" key="11">
    <source>
    </source>
</evidence>
<evidence type="ECO:0000269" key="12">
    <source>
    </source>
</evidence>
<evidence type="ECO:0000269" key="13">
    <source>
    </source>
</evidence>
<evidence type="ECO:0000269" key="14">
    <source>
    </source>
</evidence>
<evidence type="ECO:0000269" key="15">
    <source>
    </source>
</evidence>
<evidence type="ECO:0000269" key="16">
    <source>
    </source>
</evidence>
<evidence type="ECO:0000269" key="17">
    <source>
    </source>
</evidence>
<evidence type="ECO:0000269" key="18">
    <source>
    </source>
</evidence>
<evidence type="ECO:0000269" key="19">
    <source>
    </source>
</evidence>
<evidence type="ECO:0000303" key="20">
    <source>
    </source>
</evidence>
<evidence type="ECO:0000303" key="21">
    <source ref="1"/>
</evidence>
<evidence type="ECO:0000305" key="22"/>
<evidence type="ECO:0007744" key="23">
    <source>
    </source>
</evidence>
<evidence type="ECO:0007829" key="24">
    <source>
        <dbReference type="PDB" id="2NO2"/>
    </source>
</evidence>
<evidence type="ECO:0007829" key="25">
    <source>
        <dbReference type="PDB" id="2QA7"/>
    </source>
</evidence>
<evidence type="ECO:0007829" key="26">
    <source>
        <dbReference type="PDB" id="3I00"/>
    </source>
</evidence>
<protein>
    <recommendedName>
        <fullName>Huntingtin-interacting protein 1</fullName>
        <shortName>HIP-1</shortName>
    </recommendedName>
    <alternativeName>
        <fullName>Huntingtin-interacting protein I</fullName>
        <shortName>HIP-I</shortName>
    </alternativeName>
</protein>
<reference key="1">
    <citation type="submission" date="2013-07" db="EMBL/GenBank/DDBJ databases">
        <authorList>
            <person name="Kim R.N."/>
            <person name="Lira M.E."/>
            <person name="Takeuchi K."/>
            <person name="Song J.Y."/>
            <person name="Hong M."/>
            <person name="Oh E."/>
            <person name="Mao M."/>
            <person name="Han J."/>
            <person name="Choi S.J."/>
            <person name="Kim J."/>
            <person name="Choi Y.L."/>
        </authorList>
    </citation>
    <scope>NUCLEOTIDE SEQUENCE [MRNA] (ISOFORM 4)</scope>
</reference>
<reference key="2">
    <citation type="journal article" date="2004" name="Nat. Genet.">
        <title>Complete sequencing and characterization of 21,243 full-length human cDNAs.</title>
        <authorList>
            <person name="Ota T."/>
            <person name="Suzuki Y."/>
            <person name="Nishikawa T."/>
            <person name="Otsuki T."/>
            <person name="Sugiyama T."/>
            <person name="Irie R."/>
            <person name="Wakamatsu A."/>
            <person name="Hayashi K."/>
            <person name="Sato H."/>
            <person name="Nagai K."/>
            <person name="Kimura K."/>
            <person name="Makita H."/>
            <person name="Sekine M."/>
            <person name="Obayashi M."/>
            <person name="Nishi T."/>
            <person name="Shibahara T."/>
            <person name="Tanaka T."/>
            <person name="Ishii S."/>
            <person name="Yamamoto J."/>
            <person name="Saito K."/>
            <person name="Kawai Y."/>
            <person name="Isono Y."/>
            <person name="Nakamura Y."/>
            <person name="Nagahari K."/>
            <person name="Murakami K."/>
            <person name="Yasuda T."/>
            <person name="Iwayanagi T."/>
            <person name="Wagatsuma M."/>
            <person name="Shiratori A."/>
            <person name="Sudo H."/>
            <person name="Hosoiri T."/>
            <person name="Kaku Y."/>
            <person name="Kodaira H."/>
            <person name="Kondo H."/>
            <person name="Sugawara M."/>
            <person name="Takahashi M."/>
            <person name="Kanda K."/>
            <person name="Yokoi T."/>
            <person name="Furuya T."/>
            <person name="Kikkawa E."/>
            <person name="Omura Y."/>
            <person name="Abe K."/>
            <person name="Kamihara K."/>
            <person name="Katsuta N."/>
            <person name="Sato K."/>
            <person name="Tanikawa M."/>
            <person name="Yamazaki M."/>
            <person name="Ninomiya K."/>
            <person name="Ishibashi T."/>
            <person name="Yamashita H."/>
            <person name="Murakawa K."/>
            <person name="Fujimori K."/>
            <person name="Tanai H."/>
            <person name="Kimata M."/>
            <person name="Watanabe M."/>
            <person name="Hiraoka S."/>
            <person name="Chiba Y."/>
            <person name="Ishida S."/>
            <person name="Ono Y."/>
            <person name="Takiguchi S."/>
            <person name="Watanabe S."/>
            <person name="Yosida M."/>
            <person name="Hotuta T."/>
            <person name="Kusano J."/>
            <person name="Kanehori K."/>
            <person name="Takahashi-Fujii A."/>
            <person name="Hara H."/>
            <person name="Tanase T.-O."/>
            <person name="Nomura Y."/>
            <person name="Togiya S."/>
            <person name="Komai F."/>
            <person name="Hara R."/>
            <person name="Takeuchi K."/>
            <person name="Arita M."/>
            <person name="Imose N."/>
            <person name="Musashino K."/>
            <person name="Yuuki H."/>
            <person name="Oshima A."/>
            <person name="Sasaki N."/>
            <person name="Aotsuka S."/>
            <person name="Yoshikawa Y."/>
            <person name="Matsunawa H."/>
            <person name="Ichihara T."/>
            <person name="Shiohata N."/>
            <person name="Sano S."/>
            <person name="Moriya S."/>
            <person name="Momiyama H."/>
            <person name="Satoh N."/>
            <person name="Takami S."/>
            <person name="Terashima Y."/>
            <person name="Suzuki O."/>
            <person name="Nakagawa S."/>
            <person name="Senoh A."/>
            <person name="Mizoguchi H."/>
            <person name="Goto Y."/>
            <person name="Shimizu F."/>
            <person name="Wakebe H."/>
            <person name="Hishigaki H."/>
            <person name="Watanabe T."/>
            <person name="Sugiyama A."/>
            <person name="Takemoto M."/>
            <person name="Kawakami B."/>
            <person name="Yamazaki M."/>
            <person name="Watanabe K."/>
            <person name="Kumagai A."/>
            <person name="Itakura S."/>
            <person name="Fukuzumi Y."/>
            <person name="Fujimori Y."/>
            <person name="Komiyama M."/>
            <person name="Tashiro H."/>
            <person name="Tanigami A."/>
            <person name="Fujiwara T."/>
            <person name="Ono T."/>
            <person name="Yamada K."/>
            <person name="Fujii Y."/>
            <person name="Ozaki K."/>
            <person name="Hirao M."/>
            <person name="Ohmori Y."/>
            <person name="Kawabata A."/>
            <person name="Hikiji T."/>
            <person name="Kobatake N."/>
            <person name="Inagaki H."/>
            <person name="Ikema Y."/>
            <person name="Okamoto S."/>
            <person name="Okitani R."/>
            <person name="Kawakami T."/>
            <person name="Noguchi S."/>
            <person name="Itoh T."/>
            <person name="Shigeta K."/>
            <person name="Senba T."/>
            <person name="Matsumura K."/>
            <person name="Nakajima Y."/>
            <person name="Mizuno T."/>
            <person name="Morinaga M."/>
            <person name="Sasaki M."/>
            <person name="Togashi T."/>
            <person name="Oyama M."/>
            <person name="Hata H."/>
            <person name="Watanabe M."/>
            <person name="Komatsu T."/>
            <person name="Mizushima-Sugano J."/>
            <person name="Satoh T."/>
            <person name="Shirai Y."/>
            <person name="Takahashi Y."/>
            <person name="Nakagawa K."/>
            <person name="Okumura K."/>
            <person name="Nagase T."/>
            <person name="Nomura N."/>
            <person name="Kikuchi H."/>
            <person name="Masuho Y."/>
            <person name="Yamashita R."/>
            <person name="Nakai K."/>
            <person name="Yada T."/>
            <person name="Nakamura Y."/>
            <person name="Ohara O."/>
            <person name="Isogai T."/>
            <person name="Sugano S."/>
        </authorList>
    </citation>
    <scope>NUCLEOTIDE SEQUENCE [LARGE SCALE MRNA] (ISOFORM 3)</scope>
    <source>
        <tissue>Uterus</tissue>
    </source>
</reference>
<reference key="3">
    <citation type="journal article" date="2003" name="Nature">
        <title>The DNA sequence of human chromosome 7.</title>
        <authorList>
            <person name="Hillier L.W."/>
            <person name="Fulton R.S."/>
            <person name="Fulton L.A."/>
            <person name="Graves T.A."/>
            <person name="Pepin K.H."/>
            <person name="Wagner-McPherson C."/>
            <person name="Layman D."/>
            <person name="Maas J."/>
            <person name="Jaeger S."/>
            <person name="Walker R."/>
            <person name="Wylie K."/>
            <person name="Sekhon M."/>
            <person name="Becker M.C."/>
            <person name="O'Laughlin M.D."/>
            <person name="Schaller M.E."/>
            <person name="Fewell G.A."/>
            <person name="Delehaunty K.D."/>
            <person name="Miner T.L."/>
            <person name="Nash W.E."/>
            <person name="Cordes M."/>
            <person name="Du H."/>
            <person name="Sun H."/>
            <person name="Edwards J."/>
            <person name="Bradshaw-Cordum H."/>
            <person name="Ali J."/>
            <person name="Andrews S."/>
            <person name="Isak A."/>
            <person name="Vanbrunt A."/>
            <person name="Nguyen C."/>
            <person name="Du F."/>
            <person name="Lamar B."/>
            <person name="Courtney L."/>
            <person name="Kalicki J."/>
            <person name="Ozersky P."/>
            <person name="Bielicki L."/>
            <person name="Scott K."/>
            <person name="Holmes A."/>
            <person name="Harkins R."/>
            <person name="Harris A."/>
            <person name="Strong C.M."/>
            <person name="Hou S."/>
            <person name="Tomlinson C."/>
            <person name="Dauphin-Kohlberg S."/>
            <person name="Kozlowicz-Reilly A."/>
            <person name="Leonard S."/>
            <person name="Rohlfing T."/>
            <person name="Rock S.M."/>
            <person name="Tin-Wollam A.-M."/>
            <person name="Abbott A."/>
            <person name="Minx P."/>
            <person name="Maupin R."/>
            <person name="Strowmatt C."/>
            <person name="Latreille P."/>
            <person name="Miller N."/>
            <person name="Johnson D."/>
            <person name="Murray J."/>
            <person name="Woessner J.P."/>
            <person name="Wendl M.C."/>
            <person name="Yang S.-P."/>
            <person name="Schultz B.R."/>
            <person name="Wallis J.W."/>
            <person name="Spieth J."/>
            <person name="Bieri T.A."/>
            <person name="Nelson J.O."/>
            <person name="Berkowicz N."/>
            <person name="Wohldmann P.E."/>
            <person name="Cook L.L."/>
            <person name="Hickenbotham M.T."/>
            <person name="Eldred J."/>
            <person name="Williams D."/>
            <person name="Bedell J.A."/>
            <person name="Mardis E.R."/>
            <person name="Clifton S.W."/>
            <person name="Chissoe S.L."/>
            <person name="Marra M.A."/>
            <person name="Raymond C."/>
            <person name="Haugen E."/>
            <person name="Gillett W."/>
            <person name="Zhou Y."/>
            <person name="James R."/>
            <person name="Phelps K."/>
            <person name="Iadanoto S."/>
            <person name="Bubb K."/>
            <person name="Simms E."/>
            <person name="Levy R."/>
            <person name="Clendenning J."/>
            <person name="Kaul R."/>
            <person name="Kent W.J."/>
            <person name="Furey T.S."/>
            <person name="Baertsch R.A."/>
            <person name="Brent M.R."/>
            <person name="Keibler E."/>
            <person name="Flicek P."/>
            <person name="Bork P."/>
            <person name="Suyama M."/>
            <person name="Bailey J.A."/>
            <person name="Portnoy M.E."/>
            <person name="Torrents D."/>
            <person name="Chinwalla A.T."/>
            <person name="Gish W.R."/>
            <person name="Eddy S.R."/>
            <person name="McPherson J.D."/>
            <person name="Olson M.V."/>
            <person name="Eichler E.E."/>
            <person name="Green E.D."/>
            <person name="Waterston R.H."/>
            <person name="Wilson R.K."/>
        </authorList>
    </citation>
    <scope>NUCLEOTIDE SEQUENCE [LARGE SCALE GENOMIC DNA]</scope>
</reference>
<reference key="4">
    <citation type="journal article" date="2004" name="Genome Res.">
        <title>The status, quality, and expansion of the NIH full-length cDNA project: the Mammalian Gene Collection (MGC).</title>
        <authorList>
            <consortium name="The MGC Project Team"/>
        </authorList>
    </citation>
    <scope>NUCLEOTIDE SEQUENCE [LARGE SCALE MRNA]</scope>
</reference>
<reference key="5">
    <citation type="journal article" date="2002" name="Nat. Cell Biol.">
        <title>Recruitment and activation of caspase-8 by the Huntingtin-interacting protein Hip-1 and a novel partner Hippi.</title>
        <authorList>
            <person name="Gervais F.G."/>
            <person name="Singaraja R."/>
            <person name="Xanthoudakis S."/>
            <person name="Gutekunst C.-A."/>
            <person name="Leavitt B.R."/>
            <person name="Metzler M."/>
            <person name="Hackam A.S."/>
            <person name="Tam J."/>
            <person name="Vaillancourt J.P."/>
            <person name="Houtzager V."/>
            <person name="Rasper D.M."/>
            <person name="Roy S."/>
            <person name="Hayden M.R."/>
            <person name="Nicholson D.W."/>
        </authorList>
    </citation>
    <scope>NUCLEOTIDE SEQUENCE [MRNA] OF 8-1037</scope>
    <scope>INTERACTION WITH IFT57</scope>
    <scope>SUBUNIT</scope>
    <scope>DOMAIN</scope>
</reference>
<reference key="6">
    <citation type="submission" date="1998-03" db="EMBL/GenBank/DDBJ databases">
        <title>Genomic organization of the human HIP1 gene and its exclusion as a candidate gene in a family diagnosed with Huntington disease without CAG expansion.</title>
        <authorList>
            <person name="Huq A.H.M.M."/>
            <person name="Nichol K."/>
            <person name="Osborne L."/>
            <person name="Scherer S.W."/>
            <person name="Squitieri F."/>
            <person name="Hayden M.R."/>
        </authorList>
    </citation>
    <scope>NUCLEOTIDE SEQUENCE [GENOMIC DNA] OF 43-1037</scope>
</reference>
<reference key="7">
    <citation type="journal article" date="1997" name="Nat. Genet.">
        <title>HIP1, a human homologue of S. cerevisiae Sla2p, interacts with membrane-associated huntingtin in the brain.</title>
        <authorList>
            <person name="Kalchman M.A."/>
            <person name="Koide H.B."/>
            <person name="McCutcheon K."/>
            <person name="Graham R.K."/>
            <person name="Nichol K."/>
            <person name="Nishiyama K."/>
            <person name="Kazemi-Esfarjani P."/>
            <person name="Lynn F.C."/>
            <person name="Wellington C."/>
            <person name="Metzler M."/>
            <person name="Goldberg Y.P."/>
            <person name="Kanazawa I."/>
            <person name="Geitz R.D."/>
            <person name="Hayden M.R."/>
        </authorList>
    </citation>
    <scope>NUCLEOTIDE SEQUENCE [MRNA] OF 43-1037</scope>
    <scope>INTERACTION WITH HTT</scope>
    <scope>TISSUE SPECIFICITY</scope>
</reference>
<reference key="8">
    <citation type="journal article" date="1997" name="Hum. Mol. Genet.">
        <title>HIP-I: a huntingtin interacting protein isolated by the yeast two-hybrid system.</title>
        <authorList>
            <person name="Wanker E.E."/>
            <person name="Rovira C."/>
            <person name="Scherzinger E."/>
            <person name="Hasenbank R."/>
            <person name="Waelter S."/>
            <person name="Tait D."/>
            <person name="Colicelli J."/>
            <person name="Lehrach H."/>
        </authorList>
    </citation>
    <scope>NUCLEOTIDE SEQUENCE [MRNA] OF 245-644</scope>
    <scope>FUNCTION</scope>
    <scope>INTERACTION WITH HTT</scope>
    <scope>TISSUE SPECIFICITY</scope>
    <source>
        <tissue>Brain</tissue>
    </source>
</reference>
<reference key="9">
    <citation type="journal article" date="1998" name="Blood">
        <title>Fusion of Huntingtin interacting protein 1 to platelet-derived growth factor beta receptor (PDGFbetaR) in chronic myelomonocytic leukemia with t(5;7)(q33;q11.2).</title>
        <authorList>
            <person name="Ross T.S."/>
            <person name="Bernard O.A."/>
            <person name="Berger R."/>
            <person name="Gilliland D.G."/>
        </authorList>
    </citation>
    <scope>CHROMOSOMAL TRANSLOCATION</scope>
</reference>
<reference key="10">
    <citation type="journal article" date="2000" name="J. Biol. Chem.">
        <title>Huntingtin interacting protein 1 induces apoptosis via a novel caspase-dependent death effector domain.</title>
        <authorList>
            <person name="Hackam A.S."/>
            <person name="Yassa A.S."/>
            <person name="Singaraja R."/>
            <person name="Metzler M."/>
            <person name="Gutekunst C.-A."/>
            <person name="Gan L."/>
            <person name="Warby S."/>
            <person name="Wellington C.L."/>
            <person name="Vaillancourt J."/>
            <person name="Chen N."/>
            <person name="Gervais F.G."/>
            <person name="Raymond L."/>
            <person name="Nicholson D.W."/>
            <person name="Hayden M.R."/>
        </authorList>
    </citation>
    <scope>FUNCTION</scope>
    <scope>MUTAGENESIS OF PHE-432</scope>
</reference>
<reference key="11">
    <citation type="journal article" date="2000" name="Mamm. Genome">
        <title>HIP12 is a non-proapoptotic member of a gene family including HIP1, an interacting protein with huntingtin.</title>
        <authorList>
            <person name="Chopra V.S."/>
            <person name="Metzler M."/>
            <person name="Rasper D.M."/>
            <person name="Engqvist-Goldstein A.E.Y."/>
            <person name="Singaraja R."/>
            <person name="Gan L."/>
            <person name="Fichter K.M."/>
            <person name="McCutcheon K."/>
            <person name="Drubin D."/>
            <person name="Nicholson D.W."/>
            <person name="Hayden M.R."/>
        </authorList>
    </citation>
    <scope>ALTERNATIVE SPLICING</scope>
</reference>
<reference key="12">
    <citation type="journal article" date="2001" name="Hum. Mol. Genet.">
        <title>The huntingtin interacting protein HIP1 is a clathrin and alpha-adaptin-binding protein involved in receptor-mediated endocytosis.</title>
        <authorList>
            <person name="Waelter S."/>
            <person name="Scherzinger E."/>
            <person name="Hasenbank R."/>
            <person name="Nordhoff E."/>
            <person name="Lurz R."/>
            <person name="Goehler H."/>
            <person name="Gauss C."/>
            <person name="Sathasivam K."/>
            <person name="Bates G.P."/>
            <person name="Lehrach H."/>
            <person name="Wanker E.E."/>
        </authorList>
    </citation>
    <scope>FUNCTION</scope>
    <scope>INTERACTION WITH AP2A1; AP2A2 AND CLTC</scope>
    <scope>SUBCELLULAR LOCATION</scope>
</reference>
<reference key="13">
    <citation type="journal article" date="2001" name="J. Biol. Chem.">
        <title>HIP1 functions in clathrin-mediated endocytosis through binding to clathrin and adaptor protein 2.</title>
        <authorList>
            <person name="Metzler M."/>
            <person name="Legendre-Guillemin V."/>
            <person name="Gan L."/>
            <person name="Chopra V."/>
            <person name="Kwok A."/>
            <person name="McPherson P.S."/>
            <person name="Hayden M.R."/>
        </authorList>
    </citation>
    <scope>SUBCELLULAR LOCATION</scope>
</reference>
<reference key="14">
    <citation type="journal article" date="2001" name="J. Biol. Chem.">
        <title>Clathrin- and AP-2-binding sites in HIP1 uncover a general assembly role for endocytic accessory proteins.</title>
        <authorList>
            <person name="Mishra S.K."/>
            <person name="Agostinelli N.R."/>
            <person name="Brett T.J."/>
            <person name="Mizukami I."/>
            <person name="Ross T.S."/>
            <person name="Traub L.M."/>
        </authorList>
    </citation>
    <scope>FUNCTION</scope>
    <scope>SUBCELLULAR LOCATION</scope>
</reference>
<reference key="15">
    <citation type="journal article" date="2002" name="J. Biol. Chem.">
        <title>HIP1 and HIP12 display differential binding to F-actin, AP2, and clathrin. Identification of a novel interaction with clathrin light chain.</title>
        <authorList>
            <person name="Legendre-Guillemin V."/>
            <person name="Metzler M."/>
            <person name="Charbonneau M."/>
            <person name="Gan L."/>
            <person name="Chopra V."/>
            <person name="Philie J."/>
            <person name="Hayden M.R."/>
            <person name="McPherson P.S."/>
        </authorList>
    </citation>
    <scope>FUNCTION</scope>
    <scope>INTERACTION WITH CLTB AND HIP1R</scope>
    <scope>SUBCELLULAR LOCATION</scope>
</reference>
<reference key="16">
    <citation type="journal article" date="2002" name="J. Clin. Invest.">
        <title>Huntingtin-interacting protein 1 is overexpressed in prostate and colon cancer and is critical for cellular survival.</title>
        <authorList>
            <person name="Rao D.S."/>
            <person name="Hyun T.S."/>
            <person name="Kumar P.D."/>
            <person name="Mizukami I.F."/>
            <person name="Rubin M.A."/>
            <person name="Lucas P.C."/>
            <person name="Sanda M.G."/>
            <person name="Ross T.S."/>
        </authorList>
    </citation>
    <scope>FUNCTION</scope>
    <scope>TISSUE SPECIFICITY</scope>
</reference>
<reference key="17">
    <citation type="journal article" date="2004" name="J. Biol. Chem.">
        <title>HIP1 and HIP1r stabilize receptor tyrosine kinases and bind 3-phosphoinositides via epsin N-terminal homology domains.</title>
        <authorList>
            <person name="Hyun T.S."/>
            <person name="Rao D.S."/>
            <person name="Saint-Dic D."/>
            <person name="Michael L.E."/>
            <person name="Kumar P.D."/>
            <person name="Bradley S.V."/>
            <person name="Mizukami I.F."/>
            <person name="Oravecz-Wilson K.I."/>
            <person name="Ross T.S."/>
        </authorList>
    </citation>
    <scope>FUNCTION</scope>
</reference>
<reference key="18">
    <citation type="journal article" date="2005" name="J. Biol. Chem.">
        <title>Huntingtin-interacting protein 1 (Hip1) and Hip1-related protein (Hip1R) bind the conserved sequence of clathrin light chains and thereby influence clathrin assembly in vitro and actin distribution in vivo.</title>
        <authorList>
            <person name="Chen C.-Y."/>
            <person name="Brodsky F.M."/>
        </authorList>
    </citation>
    <scope>INTERACTION WITH CLTB</scope>
</reference>
<reference key="19">
    <citation type="journal article" date="2005" name="J. Cell Biol.">
        <title>Huntingtin interacting protein 1 modulates the transcriptional activity of nuclear hormone receptors.</title>
        <authorList>
            <person name="Mills I.G."/>
            <person name="Gaughan L."/>
            <person name="Robson C."/>
            <person name="Ross T."/>
            <person name="McCracken S."/>
            <person name="Kelly J."/>
            <person name="Neal D.E."/>
        </authorList>
    </citation>
    <scope>FUNCTION</scope>
    <scope>INTERACTION WITH AR</scope>
    <scope>SUBCELLULAR LOCATION</scope>
    <scope>MUTAGENESIS OF LYS-56; LYS-58 AND ARG-1005</scope>
</reference>
<reference key="20">
    <citation type="journal article" date="2008" name="J. Biol. Chem.">
        <title>Actin binding by Hip1 (huntingtin-interacting protein 1) and Hip1R (Hip1-related protein) is regulated by clathrin light chain.</title>
        <authorList>
            <person name="Wilbur J.D."/>
            <person name="Chen C.-Y."/>
            <person name="Manalo V."/>
            <person name="Hwang P.K."/>
            <person name="Fletterick R.J."/>
            <person name="Brodsky F.M."/>
        </authorList>
    </citation>
    <scope>FUNCTION</scope>
    <scope>SUBUNIT</scope>
    <scope>INTERACTION WITH F-ACTIN</scope>
</reference>
<reference key="21">
    <citation type="journal article" date="2010" name="Sci. Signal.">
        <title>Quantitative phosphoproteomics reveals widespread full phosphorylation site occupancy during mitosis.</title>
        <authorList>
            <person name="Olsen J.V."/>
            <person name="Vermeulen M."/>
            <person name="Santamaria A."/>
            <person name="Kumar C."/>
            <person name="Miller M.L."/>
            <person name="Jensen L.J."/>
            <person name="Gnad F."/>
            <person name="Cox J."/>
            <person name="Jensen T.S."/>
            <person name="Nigg E.A."/>
            <person name="Brunak S."/>
            <person name="Mann M."/>
        </authorList>
    </citation>
    <scope>IDENTIFICATION BY MASS SPECTROMETRY [LARGE SCALE ANALYSIS]</scope>
    <source>
        <tissue>Cervix carcinoma</tissue>
    </source>
</reference>
<reference key="22">
    <citation type="journal article" date="2011" name="BMC Syst. Biol.">
        <title>Initial characterization of the human central proteome.</title>
        <authorList>
            <person name="Burkard T.R."/>
            <person name="Planyavsky M."/>
            <person name="Kaupe I."/>
            <person name="Breitwieser F.P."/>
            <person name="Buerckstuemmer T."/>
            <person name="Bennett K.L."/>
            <person name="Superti-Furga G."/>
            <person name="Colinge J."/>
        </authorList>
    </citation>
    <scope>IDENTIFICATION BY MASS SPECTROMETRY [LARGE SCALE ANALYSIS]</scope>
</reference>
<reference key="23">
    <citation type="journal article" date="2014" name="J. Proteomics">
        <title>An enzyme assisted RP-RPLC approach for in-depth analysis of human liver phosphoproteome.</title>
        <authorList>
            <person name="Bian Y."/>
            <person name="Song C."/>
            <person name="Cheng K."/>
            <person name="Dong M."/>
            <person name="Wang F."/>
            <person name="Huang J."/>
            <person name="Sun D."/>
            <person name="Wang L."/>
            <person name="Ye M."/>
            <person name="Zou H."/>
        </authorList>
    </citation>
    <scope>PHOSPHORYLATION [LARGE SCALE ANALYSIS] AT SER-338</scope>
    <scope>IDENTIFICATION BY MASS SPECTROMETRY [LARGE SCALE ANALYSIS]</scope>
    <source>
        <tissue>Liver</tissue>
    </source>
</reference>
<reference key="24">
    <citation type="journal article" date="2015" name="Proteomics">
        <title>N-terminome analysis of the human mitochondrial proteome.</title>
        <authorList>
            <person name="Vaca Jacome A.S."/>
            <person name="Rabilloud T."/>
            <person name="Schaeffer-Reiss C."/>
            <person name="Rompais M."/>
            <person name="Ayoub D."/>
            <person name="Lane L."/>
            <person name="Bairoch A."/>
            <person name="Van Dorsselaer A."/>
            <person name="Carapito C."/>
        </authorList>
    </citation>
    <scope>IDENTIFICATION BY MASS SPECTROMETRY [LARGE SCALE ANALYSIS]</scope>
</reference>
<reference key="25">
    <citation type="journal article" date="2007" name="J. Mol. Biol.">
        <title>Crystal structure at 2.8 A of the DLLRKN-containing coiled-coil domain of huntingtin-interacting protein 1 (HIP1) reveals a surface suitable for clathrin light chain binding.</title>
        <authorList>
            <person name="Ybe J.A."/>
            <person name="Mishra S."/>
            <person name="Helms S."/>
            <person name="Nix J."/>
        </authorList>
    </citation>
    <scope>X-RAY CRYSTALLOGRAPHY (2.8 ANGSTROMS) OF 474-579</scope>
</reference>
<reference key="26">
    <citation type="journal article" date="2008" name="J. Mol. Biol.">
        <title>Crystal structure at 2.8 A of Huntingtin-interacting protein 1 (HIP1) coiled-coil domain reveals a charged surface suitable for HIP1 protein interactor (HIPPI).</title>
        <authorList>
            <person name="Niu Q."/>
            <person name="Ybe J.A."/>
        </authorList>
    </citation>
    <scope>X-RAY CRYSTALLOGRAPHY (2.8 ANGSTROMS) OF 362-474</scope>
</reference>
<accession>O00291</accession>
<accession>B4E3I7</accession>
<accession>E7ES17</accession>
<accession>O00328</accession>
<accession>Q2TB58</accession>
<accession>Q8TDL4</accession>
<accession>V5LU97</accession>
<comment type="function">
    <text evidence="2 7 8 9 11 12 13 15 16 18">Plays a role in clathrin-mediated endocytosis and trafficking (PubMed:11532990, PubMed:11577110, PubMed:11889126). Involved in regulating AMPA receptor trafficking in the central nervous system in an NMDA-dependent manner (By similarity). Regulates presynaptic nerve terminal activity (By similarity). Enhances androgen receptor (AR)-mediated transcription (PubMed:16027218). May act as a proapoptotic protein that induces cell death by acting through the intrinsic apoptosis pathway (PubMed:11007801). Binds 3-phosphoinositides (via ENTH domain) (PubMed:14732715). May act through the ENTH domain to promote cell survival by stabilizing receptor tyrosine kinases following ligand-induced endocytosis (PubMed:14732715). May play a functional role in the cell filament networks (PubMed:18790740). May be required for differentiation, proliferation, and/or survival of somatic and germline progenitors (PubMed:11007801, PubMed:12163454).</text>
</comment>
<comment type="subunit">
    <text evidence="8 10 11 14 15 16 17 18">Homodimer. Binds actin. Binds HTT (via N-terminus). This interaction is restricted to the brain. Binds to IFT57. In normal conditions, it poorly interacts with IFT57, HIP1 being strongly associated with HTT. However, in mutant HTT proteins with a long poly-Gln region, interaction between HTT and HIP1 is inhibited, promoting the interaction between HIP1 and IFT57. Interacts with CLTB (via N-terminus). Interacts (via coiled coil domain) with AR. Interacts with AP2A1, AP2A2, CLTC and HIP1R. Interacts with GRIA1, GRIN2A and GRIN2B.</text>
</comment>
<comment type="interaction">
    <interactant intactId="EBI-473886">
        <id>O00291</id>
    </interactant>
    <interactant intactId="EBI-25835070">
        <id>Q9Y614</id>
        <label>ACTL7B</label>
    </interactant>
    <organismsDiffer>false</organismsDiffer>
    <experiments>3</experiments>
</comment>
<comment type="interaction">
    <interactant intactId="EBI-473886">
        <id>O00291</id>
    </interactant>
    <interactant intactId="EBI-8466265">
        <id>Q96MA6</id>
        <label>AK8</label>
    </interactant>
    <organismsDiffer>false</organismsDiffer>
    <experiments>3</experiments>
</comment>
<comment type="interaction">
    <interactant intactId="EBI-473886">
        <id>O00291</id>
    </interactant>
    <interactant intactId="EBI-12323557">
        <id>Q9Y303-2</id>
        <label>AMDHD2</label>
    </interactant>
    <organismsDiffer>false</organismsDiffer>
    <experiments>3</experiments>
</comment>
<comment type="interaction">
    <interactant intactId="EBI-473886">
        <id>O00291</id>
    </interactant>
    <interactant intactId="EBI-1048913">
        <id>Q9H0Y0</id>
        <label>ATG10</label>
    </interactant>
    <organismsDiffer>false</organismsDiffer>
    <experiments>3</experiments>
</comment>
<comment type="interaction">
    <interactant intactId="EBI-473886">
        <id>O00291</id>
    </interactant>
    <interactant intactId="EBI-8994378">
        <id>Q14032</id>
        <label>BAAT</label>
    </interactant>
    <organismsDiffer>false</organismsDiffer>
    <experiments>3</experiments>
</comment>
<comment type="interaction">
    <interactant intactId="EBI-473886">
        <id>O00291</id>
    </interactant>
    <interactant intactId="EBI-10693038">
        <id>Q9NSI6-4</id>
        <label>BRWD1</label>
    </interactant>
    <organismsDiffer>false</organismsDiffer>
    <experiments>3</experiments>
</comment>
<comment type="interaction">
    <interactant intactId="EBI-473886">
        <id>O00291</id>
    </interactant>
    <interactant intactId="EBI-7996695">
        <id>Q8WZ55</id>
        <label>BSND</label>
    </interactant>
    <organismsDiffer>false</organismsDiffer>
    <experiments>3</experiments>
</comment>
<comment type="interaction">
    <interactant intactId="EBI-473886">
        <id>O00291</id>
    </interactant>
    <interactant intactId="EBI-3844053">
        <id>Q13901</id>
        <label>C1D</label>
    </interactant>
    <organismsDiffer>false</organismsDiffer>
    <experiments>3</experiments>
</comment>
<comment type="interaction">
    <interactant intactId="EBI-473886">
        <id>O00291</id>
    </interactant>
    <interactant intactId="EBI-18036948">
        <id>Q3SXR2</id>
        <label>C3orf36</label>
    </interactant>
    <organismsDiffer>false</organismsDiffer>
    <experiments>3</experiments>
</comment>
<comment type="interaction">
    <interactant intactId="EBI-473886">
        <id>O00291</id>
    </interactant>
    <interactant intactId="EBI-4392727">
        <id>O00257-3</id>
        <label>CBX4</label>
    </interactant>
    <organismsDiffer>false</organismsDiffer>
    <experiments>3</experiments>
</comment>
<comment type="interaction">
    <interactant intactId="EBI-473886">
        <id>O00291</id>
    </interactant>
    <interactant intactId="EBI-711290">
        <id>P42773</id>
        <label>CDKN2C</label>
    </interactant>
    <organismsDiffer>false</organismsDiffer>
    <experiments>3</experiments>
</comment>
<comment type="interaction">
    <interactant intactId="EBI-473886">
        <id>O00291</id>
    </interactant>
    <interactant intactId="EBI-742422">
        <id>Q96M91</id>
        <label>CFAP53</label>
    </interactant>
    <organismsDiffer>false</organismsDiffer>
    <experiments>3</experiments>
</comment>
<comment type="interaction">
    <interactant intactId="EBI-473886">
        <id>O00291</id>
    </interactant>
    <interactant intactId="EBI-4401010">
        <id>P09496-2</id>
        <label>CLTA</label>
    </interactant>
    <organismsDiffer>false</organismsDiffer>
    <experiments>3</experiments>
</comment>
<comment type="interaction">
    <interactant intactId="EBI-473886">
        <id>O00291</id>
    </interactant>
    <interactant intactId="EBI-12375799">
        <id>P02458-1</id>
        <label>COL2A1</label>
    </interactant>
    <organismsDiffer>false</organismsDiffer>
    <experiments>3</experiments>
</comment>
<comment type="interaction">
    <interactant intactId="EBI-473886">
        <id>O00291</id>
    </interactant>
    <interactant intactId="EBI-25835363">
        <id>Q9UKG9-2</id>
        <label>CROT</label>
    </interactant>
    <organismsDiffer>false</organismsDiffer>
    <experiments>3</experiments>
</comment>
<comment type="interaction">
    <interactant intactId="EBI-473886">
        <id>O00291</id>
    </interactant>
    <interactant intactId="EBI-491549">
        <id>P35222</id>
        <label>CTNNB1</label>
    </interactant>
    <organismsDiffer>false</organismsDiffer>
    <experiments>3</experiments>
</comment>
<comment type="interaction">
    <interactant intactId="EBI-473886">
        <id>O00291</id>
    </interactant>
    <interactant intactId="EBI-1055930">
        <id>Q9NUQ9</id>
        <label>CYRIB</label>
    </interactant>
    <organismsDiffer>false</organismsDiffer>
    <experiments>3</experiments>
</comment>
<comment type="interaction">
    <interactant intactId="EBI-473886">
        <id>O00291</id>
    </interactant>
    <interactant intactId="EBI-724310">
        <id>Q15038</id>
        <label>DAZAP2</label>
    </interactant>
    <organismsDiffer>false</organismsDiffer>
    <experiments>4</experiments>
</comment>
<comment type="interaction">
    <interactant intactId="EBI-473886">
        <id>O00291</id>
    </interactant>
    <interactant intactId="EBI-724653">
        <id>Q9BPU6</id>
        <label>DPYSL5</label>
    </interactant>
    <organismsDiffer>false</organismsDiffer>
    <experiments>3</experiments>
</comment>
<comment type="interaction">
    <interactant intactId="EBI-473886">
        <id>O00291</id>
    </interactant>
    <interactant intactId="EBI-2339219">
        <id>Q08426</id>
        <label>EHHADH</label>
    </interactant>
    <organismsDiffer>false</organismsDiffer>
    <experiments>3</experiments>
</comment>
<comment type="interaction">
    <interactant intactId="EBI-473886">
        <id>O00291</id>
    </interactant>
    <interactant intactId="EBI-10290462">
        <id>Q96KS9</id>
        <label>FAM167A</label>
    </interactant>
    <organismsDiffer>false</organismsDiffer>
    <experiments>3</experiments>
</comment>
<comment type="interaction">
    <interactant intactId="EBI-473886">
        <id>O00291</id>
    </interactant>
    <interactant intactId="EBI-11978259">
        <id>Q92567-2</id>
        <label>FAM168A</label>
    </interactant>
    <organismsDiffer>false</organismsDiffer>
    <experiments>3</experiments>
</comment>
<comment type="interaction">
    <interactant intactId="EBI-473886">
        <id>O00291</id>
    </interactant>
    <interactant intactId="EBI-8468186">
        <id>Q8IZU1</id>
        <label>FAM9A</label>
    </interactant>
    <organismsDiffer>false</organismsDiffer>
    <experiments>3</experiments>
</comment>
<comment type="interaction">
    <interactant intactId="EBI-473886">
        <id>O00291</id>
    </interactant>
    <interactant intactId="EBI-9088619">
        <id>Q06547-3</id>
        <label>GABPB1</label>
    </interactant>
    <organismsDiffer>false</organismsDiffer>
    <experiments>3</experiments>
</comment>
<comment type="interaction">
    <interactant intactId="EBI-473886">
        <id>O00291</id>
    </interactant>
    <interactant intactId="EBI-3938654">
        <id>Q9UI32</id>
        <label>GLS2</label>
    </interactant>
    <organismsDiffer>false</organismsDiffer>
    <experiments>4</experiments>
</comment>
<comment type="interaction">
    <interactant intactId="EBI-473886">
        <id>O00291</id>
    </interactant>
    <interactant intactId="EBI-12143817">
        <id>Q49A26-4</id>
        <label>GLYR1</label>
    </interactant>
    <organismsDiffer>false</organismsDiffer>
    <experiments>3</experiments>
</comment>
<comment type="interaction">
    <interactant intactId="EBI-473886">
        <id>O00291</id>
    </interactant>
    <interactant intactId="EBI-25835621">
        <id>Q96EW2-2</id>
        <label>HSPBAP1</label>
    </interactant>
    <organismsDiffer>false</organismsDiffer>
    <experiments>3</experiments>
</comment>
<comment type="interaction">
    <interactant intactId="EBI-473886">
        <id>O00291</id>
    </interactant>
    <interactant intactId="EBI-466029">
        <id>P42858</id>
        <label>HTT</label>
    </interactant>
    <organismsDiffer>false</organismsDiffer>
    <experiments>7</experiments>
</comment>
<comment type="interaction">
    <interactant intactId="EBI-473886">
        <id>O00291</id>
    </interactant>
    <interactant intactId="EBI-720411">
        <id>Q9UK76</id>
        <label>JPT1</label>
    </interactant>
    <organismsDiffer>false</organismsDiffer>
    <experiments>3</experiments>
</comment>
<comment type="interaction">
    <interactant intactId="EBI-473886">
        <id>O00291</id>
    </interactant>
    <interactant intactId="EBI-743960">
        <id>Q8N5Z5</id>
        <label>KCTD17</label>
    </interactant>
    <organismsDiffer>false</organismsDiffer>
    <experiments>3</experiments>
</comment>
<comment type="interaction">
    <interactant intactId="EBI-473886">
        <id>O00291</id>
    </interactant>
    <interactant intactId="EBI-10973851">
        <id>Q8N4N3-2</id>
        <label>KLHL36</label>
    </interactant>
    <organismsDiffer>false</organismsDiffer>
    <experiments>3</experiments>
</comment>
<comment type="interaction">
    <interactant intactId="EBI-473886">
        <id>O00291</id>
    </interactant>
    <interactant intactId="EBI-25835523">
        <id>Q9H2C1</id>
        <label>LHX5</label>
    </interactant>
    <organismsDiffer>false</organismsDiffer>
    <experiments>3</experiments>
</comment>
<comment type="interaction">
    <interactant intactId="EBI-473886">
        <id>O00291</id>
    </interactant>
    <interactant intactId="EBI-725647">
        <id>Q99732</id>
        <label>LITAF</label>
    </interactant>
    <organismsDiffer>false</organismsDiffer>
    <experiments>6</experiments>
</comment>
<comment type="interaction">
    <interactant intactId="EBI-473886">
        <id>O00291</id>
    </interactant>
    <interactant intactId="EBI-739832">
        <id>Q8TBB1</id>
        <label>LNX1</label>
    </interactant>
    <organismsDiffer>false</organismsDiffer>
    <experiments>3</experiments>
</comment>
<comment type="interaction">
    <interactant intactId="EBI-473886">
        <id>O00291</id>
    </interactant>
    <interactant intactId="EBI-10238012">
        <id>Q16609</id>
        <label>LPAL2</label>
    </interactant>
    <organismsDiffer>false</organismsDiffer>
    <experiments>3</experiments>
</comment>
<comment type="interaction">
    <interactant intactId="EBI-473886">
        <id>O00291</id>
    </interactant>
    <interactant intactId="EBI-14752528">
        <id>Q8IYG6</id>
        <label>LRRC56</label>
    </interactant>
    <organismsDiffer>false</organismsDiffer>
    <experiments>3</experiments>
</comment>
<comment type="interaction">
    <interactant intactId="EBI-473886">
        <id>O00291</id>
    </interactant>
    <interactant intactId="EBI-21823432">
        <id>P34949-2</id>
        <label>MPI</label>
    </interactant>
    <organismsDiffer>false</organismsDiffer>
    <experiments>3</experiments>
</comment>
<comment type="interaction">
    <interactant intactId="EBI-473886">
        <id>O00291</id>
    </interactant>
    <interactant intactId="EBI-25834665">
        <id>Q15742-2</id>
        <label>NAB2</label>
    </interactant>
    <organismsDiffer>false</organismsDiffer>
    <experiments>3</experiments>
</comment>
<comment type="interaction">
    <interactant intactId="EBI-473886">
        <id>O00291</id>
    </interactant>
    <interactant intactId="EBI-12329915">
        <id>Q8NDH3-5</id>
        <label>NPEPL1</label>
    </interactant>
    <organismsDiffer>false</organismsDiffer>
    <experiments>3</experiments>
</comment>
<comment type="interaction">
    <interactant intactId="EBI-473886">
        <id>O00291</id>
    </interactant>
    <interactant intactId="EBI-25834643">
        <id>P36639-4</id>
        <label>NUDT1</label>
    </interactant>
    <organismsDiffer>false</organismsDiffer>
    <experiments>3</experiments>
</comment>
<comment type="interaction">
    <interactant intactId="EBI-473886">
        <id>O00291</id>
    </interactant>
    <interactant intactId="EBI-22006224">
        <id>Q6N063-2</id>
        <label>OGFOD2</label>
    </interactant>
    <organismsDiffer>false</organismsDiffer>
    <experiments>3</experiments>
</comment>
<comment type="interaction">
    <interactant intactId="EBI-473886">
        <id>O00291</id>
    </interactant>
    <interactant intactId="EBI-25836043">
        <id>Q8NCQ7-2</id>
        <label>PROCA1</label>
    </interactant>
    <organismsDiffer>false</organismsDiffer>
    <experiments>3</experiments>
</comment>
<comment type="interaction">
    <interactant intactId="EBI-473886">
        <id>O00291</id>
    </interactant>
    <interactant intactId="EBI-25835884">
        <id>Q8WUD1-2</id>
        <label>RAB2B</label>
    </interactant>
    <organismsDiffer>false</organismsDiffer>
    <experiments>3</experiments>
</comment>
<comment type="interaction">
    <interactant intactId="EBI-473886">
        <id>O00291</id>
    </interactant>
    <interactant intactId="EBI-954531">
        <id>P54727</id>
        <label>RAD23B</label>
    </interactant>
    <organismsDiffer>false</organismsDiffer>
    <experiments>3</experiments>
</comment>
<comment type="interaction">
    <interactant intactId="EBI-473886">
        <id>O00291</id>
    </interactant>
    <interactant intactId="EBI-620823">
        <id>Q09028</id>
        <label>RBBP4</label>
    </interactant>
    <organismsDiffer>false</organismsDiffer>
    <experiments>3</experiments>
</comment>
<comment type="interaction">
    <interactant intactId="EBI-473886">
        <id>O00291</id>
    </interactant>
    <interactant intactId="EBI-307352">
        <id>Q04864</id>
        <label>REL</label>
    </interactant>
    <organismsDiffer>false</organismsDiffer>
    <experiments>3</experiments>
</comment>
<comment type="interaction">
    <interactant intactId="EBI-473886">
        <id>O00291</id>
    </interactant>
    <interactant intactId="EBI-25834767">
        <id>P47804-3</id>
        <label>RGR</label>
    </interactant>
    <organismsDiffer>false</organismsDiffer>
    <experiments>3</experiments>
</comment>
<comment type="interaction">
    <interactant intactId="EBI-473886">
        <id>O00291</id>
    </interactant>
    <interactant intactId="EBI-1055287">
        <id>Q15382</id>
        <label>RHEB</label>
    </interactant>
    <organismsDiffer>false</organismsDiffer>
    <experiments>3</experiments>
</comment>
<comment type="interaction">
    <interactant intactId="EBI-473886">
        <id>O00291</id>
    </interactant>
    <interactant intactId="EBI-714023">
        <id>Q8N5U6</id>
        <label>RNF10</label>
    </interactant>
    <organismsDiffer>false</organismsDiffer>
    <experiments>3</experiments>
</comment>
<comment type="interaction">
    <interactant intactId="EBI-473886">
        <id>O00291</id>
    </interactant>
    <interactant intactId="EBI-1052363">
        <id>Q9NS64</id>
        <label>RPRM</label>
    </interactant>
    <organismsDiffer>false</organismsDiffer>
    <experiments>3</experiments>
</comment>
<comment type="interaction">
    <interactant intactId="EBI-473886">
        <id>O00291</id>
    </interactant>
    <interactant intactId="EBI-25834804">
        <id>P22307-3</id>
        <label>SCP2</label>
    </interactant>
    <organismsDiffer>false</organismsDiffer>
    <experiments>3</experiments>
</comment>
<comment type="interaction">
    <interactant intactId="EBI-473886">
        <id>O00291</id>
    </interactant>
    <interactant intactId="EBI-346977">
        <id>Q15393</id>
        <label>SF3B3</label>
    </interactant>
    <organismsDiffer>false</organismsDiffer>
    <experiments>3</experiments>
</comment>
<comment type="interaction">
    <interactant intactId="EBI-473886">
        <id>O00291</id>
    </interactant>
    <interactant intactId="EBI-10818532">
        <id>Q9BZQ2</id>
        <label>SHCBP1L</label>
    </interactant>
    <organismsDiffer>false</organismsDiffer>
    <experiments>3</experiments>
</comment>
<comment type="interaction">
    <interactant intactId="EBI-473886">
        <id>O00291</id>
    </interactant>
    <interactant intactId="EBI-3232100">
        <id>Q86US8</id>
        <label>SMG6</label>
    </interactant>
    <organismsDiffer>false</organismsDiffer>
    <experiments>3</experiments>
</comment>
<comment type="interaction">
    <interactant intactId="EBI-473886">
        <id>O00291</id>
    </interactant>
    <interactant intactId="EBI-632715">
        <id>Q13573</id>
        <label>SNW1</label>
    </interactant>
    <organismsDiffer>false</organismsDiffer>
    <experiments>3</experiments>
</comment>
<comment type="interaction">
    <interactant intactId="EBI-473886">
        <id>O00291</id>
    </interactant>
    <interactant intactId="EBI-2643803">
        <id>Q8N0X7</id>
        <label>SPART</label>
    </interactant>
    <organismsDiffer>false</organismsDiffer>
    <experiments>3</experiments>
</comment>
<comment type="interaction">
    <interactant intactId="EBI-473886">
        <id>O00291</id>
    </interactant>
    <interactant intactId="EBI-751020">
        <id>Q9P2T0</id>
        <label>SPMAP2</label>
    </interactant>
    <organismsDiffer>false</organismsDiffer>
    <experiments>3</experiments>
</comment>
<comment type="interaction">
    <interactant intactId="EBI-473886">
        <id>O00291</id>
    </interactant>
    <interactant intactId="EBI-12408727">
        <id>Q5W111-2</id>
        <label>SPRYD7</label>
    </interactant>
    <organismsDiffer>false</organismsDiffer>
    <experiments>3</experiments>
</comment>
<comment type="interaction">
    <interactant intactId="EBI-473886">
        <id>O00291</id>
    </interactant>
    <interactant intactId="EBI-2659201">
        <id>Q96BD6</id>
        <label>SPSB1</label>
    </interactant>
    <organismsDiffer>false</organismsDiffer>
    <experiments>3</experiments>
</comment>
<comment type="interaction">
    <interactant intactId="EBI-473886">
        <id>O00291</id>
    </interactant>
    <interactant intactId="EBI-11123832">
        <id>O60506-4</id>
        <label>SYNCRIP</label>
    </interactant>
    <organismsDiffer>false</organismsDiffer>
    <experiments>3</experiments>
</comment>
<comment type="interaction">
    <interactant intactId="EBI-473886">
        <id>O00291</id>
    </interactant>
    <interactant intactId="EBI-745392">
        <id>Q9BSW7</id>
        <label>SYT17</label>
    </interactant>
    <organismsDiffer>false</organismsDiffer>
    <experiments>3</experiments>
</comment>
<comment type="interaction">
    <interactant intactId="EBI-473886">
        <id>O00291</id>
    </interactant>
    <interactant intactId="EBI-954089">
        <id>O15273</id>
        <label>TCAP</label>
    </interactant>
    <organismsDiffer>false</organismsDiffer>
    <experiments>3</experiments>
</comment>
<comment type="interaction">
    <interactant intactId="EBI-473886">
        <id>O00291</id>
    </interactant>
    <interactant intactId="EBI-710310">
        <id>Q15560</id>
        <label>TCEA2</label>
    </interactant>
    <organismsDiffer>false</organismsDiffer>
    <experiments>3</experiments>
</comment>
<comment type="interaction">
    <interactant intactId="EBI-473886">
        <id>O00291</id>
    </interactant>
    <interactant intactId="EBI-11955057">
        <id>Q8N8B7-2</id>
        <label>TCEANC</label>
    </interactant>
    <organismsDiffer>false</organismsDiffer>
    <experiments>3</experiments>
</comment>
<comment type="interaction">
    <interactant intactId="EBI-473886">
        <id>O00291</id>
    </interactant>
    <interactant intactId="EBI-752030">
        <id>Q96A09</id>
        <label>TENT5B</label>
    </interactant>
    <organismsDiffer>false</organismsDiffer>
    <experiments>3</experiments>
</comment>
<comment type="interaction">
    <interactant intactId="EBI-473886">
        <id>O00291</id>
    </interactant>
    <interactant intactId="EBI-711018">
        <id>P54274-2</id>
        <label>TERF1</label>
    </interactant>
    <organismsDiffer>false</organismsDiffer>
    <experiments>3</experiments>
</comment>
<comment type="interaction">
    <interactant intactId="EBI-473886">
        <id>O00291</id>
    </interactant>
    <interactant intactId="EBI-12027348">
        <id>O43548</id>
        <label>TGM5</label>
    </interactant>
    <organismsDiffer>false</organismsDiffer>
    <experiments>3</experiments>
</comment>
<comment type="interaction">
    <interactant intactId="EBI-473886">
        <id>O00291</id>
    </interactant>
    <interactant intactId="EBI-3920747">
        <id>Q9NQ88</id>
        <label>TIGAR</label>
    </interactant>
    <organismsDiffer>false</organismsDiffer>
    <experiments>3</experiments>
</comment>
<comment type="interaction">
    <interactant intactId="EBI-473886">
        <id>O00291</id>
    </interactant>
    <interactant intactId="EBI-740098">
        <id>P36406</id>
        <label>TRIM23</label>
    </interactant>
    <organismsDiffer>false</organismsDiffer>
    <experiments>3</experiments>
</comment>
<comment type="interaction">
    <interactant intactId="EBI-473886">
        <id>O00291</id>
    </interactant>
    <interactant intactId="EBI-25835297">
        <id>Q9P1Q0-4</id>
        <label>VPS54</label>
    </interactant>
    <organismsDiffer>false</organismsDiffer>
    <experiments>3</experiments>
</comment>
<comment type="interaction">
    <interactant intactId="EBI-473886">
        <id>O00291</id>
    </interactant>
    <interactant intactId="EBI-25835937">
        <id>Q8NA23-2</id>
        <label>WDR31</label>
    </interactant>
    <organismsDiffer>false</organismsDiffer>
    <experiments>3</experiments>
</comment>
<comment type="interaction">
    <interactant intactId="EBI-473886">
        <id>O00291</id>
    </interactant>
    <interactant intactId="EBI-10176632">
        <id>O43829</id>
        <label>ZBTB14</label>
    </interactant>
    <organismsDiffer>false</organismsDiffer>
    <experiments>3</experiments>
</comment>
<comment type="interaction">
    <interactant intactId="EBI-473886">
        <id>O00291</id>
    </interactant>
    <interactant intactId="EBI-12956041">
        <id>Q8IWT0-2</id>
        <label>ZBTB8OS</label>
    </interactant>
    <organismsDiffer>false</organismsDiffer>
    <experiments>3</experiments>
</comment>
<comment type="interaction">
    <interactant intactId="EBI-473886">
        <id>O00291</id>
    </interactant>
    <interactant intactId="EBI-14104088">
        <id>Q53FD0-2</id>
        <label>ZC2HC1C</label>
    </interactant>
    <organismsDiffer>false</organismsDiffer>
    <experiments>3</experiments>
</comment>
<comment type="interaction">
    <interactant intactId="EBI-473886">
        <id>O00291</id>
    </interactant>
    <interactant intactId="EBI-723434">
        <id>Q5JTY5</id>
        <label>ZNG1C</label>
    </interactant>
    <organismsDiffer>false</organismsDiffer>
    <experiments>3</experiments>
</comment>
<comment type="interaction">
    <interactant intactId="EBI-473886">
        <id>O00291</id>
    </interactant>
    <interactant intactId="EBI-6978501">
        <id>Q9EPV5</id>
        <label>Apaf1</label>
    </interactant>
    <organismsDiffer>true</organismsDiffer>
    <experiments>2</experiments>
</comment>
<comment type="interaction">
    <interactant intactId="EBI-473886">
        <id>O00291</id>
    </interactant>
    <interactant intactId="EBI-7592476">
        <id>Q9CR95</id>
        <label>Necap1</label>
    </interactant>
    <organismsDiffer>true</organismsDiffer>
    <experiments>3</experiments>
</comment>
<comment type="subcellular location">
    <subcellularLocation>
        <location>Cytoplasm</location>
    </subcellularLocation>
    <subcellularLocation>
        <location>Nucleus</location>
    </subcellularLocation>
    <subcellularLocation>
        <location>Endomembrane system</location>
    </subcellularLocation>
    <subcellularLocation>
        <location>Cytoplasmic vesicle</location>
        <location>Clathrin-coated vesicle membrane</location>
    </subcellularLocation>
    <text>Shuttles between cytoplasm and nucleus. Nuclear translocation can be induced by AR.</text>
</comment>
<comment type="alternative products">
    <event type="alternative splicing"/>
    <isoform>
        <id>O00291-1</id>
        <name>HIP1-1</name>
        <sequence type="displayed"/>
    </isoform>
    <isoform>
        <id>O00291-2</id>
        <name>HIP1-2</name>
        <sequence type="not described"/>
    </isoform>
    <isoform>
        <id>O00291-3</id>
        <name>3</name>
        <sequence type="described" ref="VSP_044736"/>
    </isoform>
    <isoform>
        <id>O00291-4</id>
        <name>4</name>
        <sequence type="described" ref="VSP_057400"/>
    </isoform>
</comment>
<comment type="tissue specificity">
    <text evidence="12 17 18">Ubiquitously expressed with the highest level in brain. Expression is up-regulated in prostate and colon cancer.</text>
</comment>
<comment type="domain">
    <text evidence="10">The pseudo DED region (pDED) mediates the interaction with IFT57.</text>
</comment>
<comment type="domain">
    <text evidence="10">Binds F-actin via the talin-like I/LWEQ domain.</text>
</comment>
<comment type="disease">
    <text evidence="19">A chromosomal aberration involving HIP1 is found in a form of chronic myelomonocytic leukemia (CMML). Translocation t(5;7)(q33;q11.2) with PDGFRB (PubMed:9616134). The chimeric HIP1-PDGFRB transcript results from an in-frame fusion of the two genes (PubMed:9616134). The reciprocal PDGFRB-HIP1 transcript is not expressed (PubMed:9616134).</text>
</comment>
<comment type="miscellaneous">
    <text>The affinity of the huntingtin protein-HIP1 interaction is inversely correlated to the length of the polyglutamine tract added to the huntingtin protein in Huntington disease.</text>
</comment>
<comment type="similarity">
    <text evidence="22">Belongs to the SLA2 family.</text>
</comment>
<comment type="sequence caution" evidence="22">
    <conflict type="erroneous initiation">
        <sequence resource="EMBL-CDS" id="AAC51257"/>
    </conflict>
</comment>
<comment type="online information" name="Atlas of Genetics and Cytogenetics in Oncology and Haematology">
    <link uri="https://atlasgeneticsoncology.org/gene/138/HIP1"/>
</comment>